<dbReference type="EC" id="2.8.1.13" evidence="1"/>
<dbReference type="EMBL" id="CU207366">
    <property type="protein sequence ID" value="CAL67187.1"/>
    <property type="molecule type" value="Genomic_DNA"/>
</dbReference>
<dbReference type="SMR" id="A0M3J2"/>
<dbReference type="STRING" id="411154.GFO_2222"/>
<dbReference type="KEGG" id="gfo:GFO_2222"/>
<dbReference type="eggNOG" id="COG0482">
    <property type="taxonomic scope" value="Bacteria"/>
</dbReference>
<dbReference type="HOGENOM" id="CLU_035188_1_0_10"/>
<dbReference type="OrthoDB" id="9800696at2"/>
<dbReference type="Proteomes" id="UP000000755">
    <property type="component" value="Chromosome"/>
</dbReference>
<dbReference type="GO" id="GO:0005737">
    <property type="term" value="C:cytoplasm"/>
    <property type="evidence" value="ECO:0007669"/>
    <property type="project" value="UniProtKB-SubCell"/>
</dbReference>
<dbReference type="GO" id="GO:0005524">
    <property type="term" value="F:ATP binding"/>
    <property type="evidence" value="ECO:0007669"/>
    <property type="project" value="UniProtKB-KW"/>
</dbReference>
<dbReference type="GO" id="GO:0000049">
    <property type="term" value="F:tRNA binding"/>
    <property type="evidence" value="ECO:0007669"/>
    <property type="project" value="UniProtKB-KW"/>
</dbReference>
<dbReference type="GO" id="GO:0103016">
    <property type="term" value="F:tRNA-uridine 2-sulfurtransferase activity"/>
    <property type="evidence" value="ECO:0007669"/>
    <property type="project" value="UniProtKB-EC"/>
</dbReference>
<dbReference type="GO" id="GO:0002143">
    <property type="term" value="P:tRNA wobble position uridine thiolation"/>
    <property type="evidence" value="ECO:0007669"/>
    <property type="project" value="TreeGrafter"/>
</dbReference>
<dbReference type="CDD" id="cd01998">
    <property type="entry name" value="MnmA_TRMU-like"/>
    <property type="match status" value="1"/>
</dbReference>
<dbReference type="FunFam" id="3.40.50.620:FF:000115">
    <property type="entry name" value="tRNA-specific 2-thiouridylase MnmA"/>
    <property type="match status" value="1"/>
</dbReference>
<dbReference type="Gene3D" id="2.30.30.280">
    <property type="entry name" value="Adenine nucleotide alpha hydrolases-like domains"/>
    <property type="match status" value="1"/>
</dbReference>
<dbReference type="Gene3D" id="3.40.50.620">
    <property type="entry name" value="HUPs"/>
    <property type="match status" value="1"/>
</dbReference>
<dbReference type="Gene3D" id="2.40.30.10">
    <property type="entry name" value="Translation factors"/>
    <property type="match status" value="1"/>
</dbReference>
<dbReference type="HAMAP" id="MF_00144">
    <property type="entry name" value="tRNA_thiouridyl_MnmA"/>
    <property type="match status" value="1"/>
</dbReference>
<dbReference type="InterPro" id="IPR004506">
    <property type="entry name" value="MnmA-like"/>
</dbReference>
<dbReference type="InterPro" id="IPR046885">
    <property type="entry name" value="MnmA-like_C"/>
</dbReference>
<dbReference type="InterPro" id="IPR046884">
    <property type="entry name" value="MnmA-like_central"/>
</dbReference>
<dbReference type="InterPro" id="IPR023382">
    <property type="entry name" value="MnmA-like_central_sf"/>
</dbReference>
<dbReference type="InterPro" id="IPR014729">
    <property type="entry name" value="Rossmann-like_a/b/a_fold"/>
</dbReference>
<dbReference type="NCBIfam" id="NF001138">
    <property type="entry name" value="PRK00143.1"/>
    <property type="match status" value="1"/>
</dbReference>
<dbReference type="NCBIfam" id="TIGR00420">
    <property type="entry name" value="trmU"/>
    <property type="match status" value="1"/>
</dbReference>
<dbReference type="PANTHER" id="PTHR11933:SF5">
    <property type="entry name" value="MITOCHONDRIAL TRNA-SPECIFIC 2-THIOURIDYLASE 1"/>
    <property type="match status" value="1"/>
</dbReference>
<dbReference type="PANTHER" id="PTHR11933">
    <property type="entry name" value="TRNA 5-METHYLAMINOMETHYL-2-THIOURIDYLATE -METHYLTRANSFERASE"/>
    <property type="match status" value="1"/>
</dbReference>
<dbReference type="Pfam" id="PF03054">
    <property type="entry name" value="tRNA_Me_trans"/>
    <property type="match status" value="1"/>
</dbReference>
<dbReference type="Pfam" id="PF20258">
    <property type="entry name" value="tRNA_Me_trans_C"/>
    <property type="match status" value="1"/>
</dbReference>
<dbReference type="Pfam" id="PF20259">
    <property type="entry name" value="tRNA_Me_trans_M"/>
    <property type="match status" value="1"/>
</dbReference>
<dbReference type="SUPFAM" id="SSF52402">
    <property type="entry name" value="Adenine nucleotide alpha hydrolases-like"/>
    <property type="match status" value="1"/>
</dbReference>
<evidence type="ECO:0000255" key="1">
    <source>
        <dbReference type="HAMAP-Rule" id="MF_00144"/>
    </source>
</evidence>
<reference key="1">
    <citation type="journal article" date="2006" name="Environ. Microbiol.">
        <title>Whole genome analysis of the marine Bacteroidetes'Gramella forsetii' reveals adaptations to degradation of polymeric organic matter.</title>
        <authorList>
            <person name="Bauer M."/>
            <person name="Kube M."/>
            <person name="Teeling H."/>
            <person name="Richter M."/>
            <person name="Lombardot T."/>
            <person name="Allers E."/>
            <person name="Wuerdemann C.A."/>
            <person name="Quast C."/>
            <person name="Kuhl H."/>
            <person name="Knaust F."/>
            <person name="Woebken D."/>
            <person name="Bischof K."/>
            <person name="Mussmann M."/>
            <person name="Choudhuri J.V."/>
            <person name="Meyer F."/>
            <person name="Reinhardt R."/>
            <person name="Amann R.I."/>
            <person name="Gloeckner F.O."/>
        </authorList>
    </citation>
    <scope>NUCLEOTIDE SEQUENCE [LARGE SCALE GENOMIC DNA]</scope>
    <source>
        <strain>DSM 17595 / CGMCC 1.15422 / KT0803</strain>
    </source>
</reference>
<organism>
    <name type="scientific">Christiangramia forsetii (strain DSM 17595 / CGMCC 1.15422 / KT0803)</name>
    <name type="common">Gramella forsetii</name>
    <dbReference type="NCBI Taxonomy" id="411154"/>
    <lineage>
        <taxon>Bacteria</taxon>
        <taxon>Pseudomonadati</taxon>
        <taxon>Bacteroidota</taxon>
        <taxon>Flavobacteriia</taxon>
        <taxon>Flavobacteriales</taxon>
        <taxon>Flavobacteriaceae</taxon>
        <taxon>Christiangramia</taxon>
    </lineage>
</organism>
<keyword id="KW-0067">ATP-binding</keyword>
<keyword id="KW-0963">Cytoplasm</keyword>
<keyword id="KW-1015">Disulfide bond</keyword>
<keyword id="KW-0547">Nucleotide-binding</keyword>
<keyword id="KW-0694">RNA-binding</keyword>
<keyword id="KW-0808">Transferase</keyword>
<keyword id="KW-0819">tRNA processing</keyword>
<keyword id="KW-0820">tRNA-binding</keyword>
<protein>
    <recommendedName>
        <fullName evidence="1">tRNA-specific 2-thiouridylase MnmA</fullName>
        <ecNumber evidence="1">2.8.1.13</ecNumber>
    </recommendedName>
</protein>
<accession>A0M3J2</accession>
<gene>
    <name evidence="1" type="primary">mnmA</name>
    <name type="ordered locus">GFO_2222</name>
</gene>
<name>MNMA_CHRFK</name>
<proteinExistence type="inferred from homology"/>
<sequence>MKKVVVGLSGGVDSSVSAYLLKEQGYEVIGLFMKNWHDDSVTISDECPWLDDSNDAMMVADKLGIPFQTVDLSEQYKERIVDYMFNEYEKGRTPNPDVLCNREIKFDVFMKIALSLGADYVATGHYCRKAEFEKDGEPIYQLLSGEDNNKDQSYFLCQLTQEQLSKTLFPIGELQKSEVRKIAAEQNLVTAEKKDSQGLCFIGKVRLPDFLQQKLKSKEGVIVEVPAGNDSYLEEDINFKSKIDQLQHLSKKFNYQLTDGKVVGKHQGAHYFTKGQRKGLAVGGTPEPLFVIDTDVIENVIYTGQGKDHPGIYRQGLFIAQDEVHWVRRDLAIDSDEELRIKARIRYRQPLQDATLHQTENGMYVIFDQPQASITEGQFVAWYQNGELLGSGVIS</sequence>
<comment type="function">
    <text evidence="1">Catalyzes the 2-thiolation of uridine at the wobble position (U34) of tRNA, leading to the formation of s(2)U34.</text>
</comment>
<comment type="catalytic activity">
    <reaction evidence="1">
        <text>S-sulfanyl-L-cysteinyl-[protein] + uridine(34) in tRNA + AH2 + ATP = 2-thiouridine(34) in tRNA + L-cysteinyl-[protein] + A + AMP + diphosphate + H(+)</text>
        <dbReference type="Rhea" id="RHEA:47032"/>
        <dbReference type="Rhea" id="RHEA-COMP:10131"/>
        <dbReference type="Rhea" id="RHEA-COMP:11726"/>
        <dbReference type="Rhea" id="RHEA-COMP:11727"/>
        <dbReference type="Rhea" id="RHEA-COMP:11728"/>
        <dbReference type="ChEBI" id="CHEBI:13193"/>
        <dbReference type="ChEBI" id="CHEBI:15378"/>
        <dbReference type="ChEBI" id="CHEBI:17499"/>
        <dbReference type="ChEBI" id="CHEBI:29950"/>
        <dbReference type="ChEBI" id="CHEBI:30616"/>
        <dbReference type="ChEBI" id="CHEBI:33019"/>
        <dbReference type="ChEBI" id="CHEBI:61963"/>
        <dbReference type="ChEBI" id="CHEBI:65315"/>
        <dbReference type="ChEBI" id="CHEBI:87170"/>
        <dbReference type="ChEBI" id="CHEBI:456215"/>
        <dbReference type="EC" id="2.8.1.13"/>
    </reaction>
</comment>
<comment type="subcellular location">
    <subcellularLocation>
        <location evidence="1">Cytoplasm</location>
    </subcellularLocation>
</comment>
<comment type="similarity">
    <text evidence="1">Belongs to the MnmA/TRMU family.</text>
</comment>
<feature type="chain" id="PRO_0000349652" description="tRNA-specific 2-thiouridylase MnmA">
    <location>
        <begin position="1"/>
        <end position="395"/>
    </location>
</feature>
<feature type="region of interest" description="Interaction with target base in tRNA" evidence="1">
    <location>
        <begin position="95"/>
        <end position="97"/>
    </location>
</feature>
<feature type="region of interest" description="Interaction with tRNA" evidence="1">
    <location>
        <begin position="150"/>
        <end position="152"/>
    </location>
</feature>
<feature type="region of interest" description="Interaction with tRNA" evidence="1">
    <location>
        <begin position="346"/>
        <end position="347"/>
    </location>
</feature>
<feature type="active site" description="Nucleophile" evidence="1">
    <location>
        <position position="100"/>
    </location>
</feature>
<feature type="active site" description="Cysteine persulfide intermediate" evidence="1">
    <location>
        <position position="200"/>
    </location>
</feature>
<feature type="binding site" evidence="1">
    <location>
        <begin position="7"/>
        <end position="14"/>
    </location>
    <ligand>
        <name>ATP</name>
        <dbReference type="ChEBI" id="CHEBI:30616"/>
    </ligand>
</feature>
<feature type="binding site" evidence="1">
    <location>
        <position position="33"/>
    </location>
    <ligand>
        <name>ATP</name>
        <dbReference type="ChEBI" id="CHEBI:30616"/>
    </ligand>
</feature>
<feature type="binding site" evidence="1">
    <location>
        <position position="124"/>
    </location>
    <ligand>
        <name>ATP</name>
        <dbReference type="ChEBI" id="CHEBI:30616"/>
    </ligand>
</feature>
<feature type="site" description="Interaction with tRNA" evidence="1">
    <location>
        <position position="125"/>
    </location>
</feature>
<feature type="site" description="Interaction with tRNA" evidence="1">
    <location>
        <position position="378"/>
    </location>
</feature>
<feature type="disulfide bond" description="Alternate" evidence="1">
    <location>
        <begin position="100"/>
        <end position="200"/>
    </location>
</feature>